<reference key="1">
    <citation type="journal article" date="1997" name="J. Bacteriol.">
        <title>Complete genome sequence of Methanobacterium thermoautotrophicum deltaH: functional analysis and comparative genomics.</title>
        <authorList>
            <person name="Smith D.R."/>
            <person name="Doucette-Stamm L.A."/>
            <person name="Deloughery C."/>
            <person name="Lee H.-M."/>
            <person name="Dubois J."/>
            <person name="Aldredge T."/>
            <person name="Bashirzadeh R."/>
            <person name="Blakely D."/>
            <person name="Cook R."/>
            <person name="Gilbert K."/>
            <person name="Harrison D."/>
            <person name="Hoang L."/>
            <person name="Keagle P."/>
            <person name="Lumm W."/>
            <person name="Pothier B."/>
            <person name="Qiu D."/>
            <person name="Spadafora R."/>
            <person name="Vicare R."/>
            <person name="Wang Y."/>
            <person name="Wierzbowski J."/>
            <person name="Gibson R."/>
            <person name="Jiwani N."/>
            <person name="Caruso A."/>
            <person name="Bush D."/>
            <person name="Safer H."/>
            <person name="Patwell D."/>
            <person name="Prabhakar S."/>
            <person name="McDougall S."/>
            <person name="Shimer G."/>
            <person name="Goyal A."/>
            <person name="Pietrovski S."/>
            <person name="Church G.M."/>
            <person name="Daniels C.J."/>
            <person name="Mao J.-I."/>
            <person name="Rice P."/>
            <person name="Noelling J."/>
            <person name="Reeve J.N."/>
        </authorList>
    </citation>
    <scope>NUCLEOTIDE SEQUENCE [LARGE SCALE GENOMIC DNA]</scope>
    <source>
        <strain>ATCC 29096 / DSM 1053 / JCM 10044 / NBRC 100330 / Delta H</strain>
    </source>
</reference>
<protein>
    <recommendedName>
        <fullName>Probable threonylcarbamoyladenosine tRNA methylthiotransferase</fullName>
        <ecNumber>2.8.4.5</ecNumber>
    </recommendedName>
    <alternativeName>
        <fullName>tRNA-t(6)A37 methylthiotransferase</fullName>
    </alternativeName>
</protein>
<name>AMTAB_METTH</name>
<accession>O26914</accession>
<evidence type="ECO:0000250" key="1">
    <source>
        <dbReference type="UniProtKB" id="Q5VV42"/>
    </source>
</evidence>
<evidence type="ECO:0000255" key="2">
    <source>
        <dbReference type="PROSITE-ProRule" id="PRU00208"/>
    </source>
</evidence>
<evidence type="ECO:0000255" key="3">
    <source>
        <dbReference type="PROSITE-ProRule" id="PRU00780"/>
    </source>
</evidence>
<evidence type="ECO:0000255" key="4">
    <source>
        <dbReference type="PROSITE-ProRule" id="PRU01266"/>
    </source>
</evidence>
<evidence type="ECO:0000305" key="5"/>
<organism>
    <name type="scientific">Methanothermobacter thermautotrophicus (strain ATCC 29096 / DSM 1053 / JCM 10044 / NBRC 100330 / Delta H)</name>
    <name type="common">Methanobacterium thermoautotrophicum</name>
    <dbReference type="NCBI Taxonomy" id="187420"/>
    <lineage>
        <taxon>Archaea</taxon>
        <taxon>Methanobacteriati</taxon>
        <taxon>Methanobacteriota</taxon>
        <taxon>Methanomada group</taxon>
        <taxon>Methanobacteria</taxon>
        <taxon>Methanobacteriales</taxon>
        <taxon>Methanobacteriaceae</taxon>
        <taxon>Methanothermobacter</taxon>
    </lineage>
</organism>
<gene>
    <name type="ordered locus">MTH_826</name>
</gene>
<feature type="chain" id="PRO_0000141761" description="Probable threonylcarbamoyladenosine tRNA methylthiotransferase">
    <location>
        <begin position="1"/>
        <end position="424"/>
    </location>
</feature>
<feature type="domain" description="MTTase N-terminal" evidence="3">
    <location>
        <begin position="4"/>
        <end position="115"/>
    </location>
</feature>
<feature type="domain" description="Radical SAM core" evidence="4">
    <location>
        <begin position="136"/>
        <end position="365"/>
    </location>
</feature>
<feature type="domain" description="TRAM" evidence="2">
    <location>
        <begin position="368"/>
        <end position="424"/>
    </location>
</feature>
<feature type="binding site" evidence="3">
    <location>
        <position position="13"/>
    </location>
    <ligand>
        <name>[4Fe-4S] cluster</name>
        <dbReference type="ChEBI" id="CHEBI:49883"/>
        <label>1</label>
    </ligand>
</feature>
<feature type="binding site" evidence="3">
    <location>
        <position position="48"/>
    </location>
    <ligand>
        <name>[4Fe-4S] cluster</name>
        <dbReference type="ChEBI" id="CHEBI:49883"/>
        <label>1</label>
    </ligand>
</feature>
<feature type="binding site" evidence="3">
    <location>
        <position position="79"/>
    </location>
    <ligand>
        <name>[4Fe-4S] cluster</name>
        <dbReference type="ChEBI" id="CHEBI:49883"/>
        <label>1</label>
    </ligand>
</feature>
<feature type="binding site" evidence="3">
    <location>
        <position position="150"/>
    </location>
    <ligand>
        <name>[4Fe-4S] cluster</name>
        <dbReference type="ChEBI" id="CHEBI:49883"/>
        <label>2</label>
        <note>4Fe-4S-S-AdoMet</note>
    </ligand>
</feature>
<feature type="binding site" evidence="3">
    <location>
        <position position="154"/>
    </location>
    <ligand>
        <name>[4Fe-4S] cluster</name>
        <dbReference type="ChEBI" id="CHEBI:49883"/>
        <label>2</label>
        <note>4Fe-4S-S-AdoMet</note>
    </ligand>
</feature>
<feature type="binding site" evidence="3">
    <location>
        <position position="157"/>
    </location>
    <ligand>
        <name>[4Fe-4S] cluster</name>
        <dbReference type="ChEBI" id="CHEBI:49883"/>
        <label>2</label>
        <note>4Fe-4S-S-AdoMet</note>
    </ligand>
</feature>
<keyword id="KW-0004">4Fe-4S</keyword>
<keyword id="KW-0408">Iron</keyword>
<keyword id="KW-0411">Iron-sulfur</keyword>
<keyword id="KW-0479">Metal-binding</keyword>
<keyword id="KW-1185">Reference proteome</keyword>
<keyword id="KW-0949">S-adenosyl-L-methionine</keyword>
<keyword id="KW-0808">Transferase</keyword>
<keyword id="KW-0819">tRNA processing</keyword>
<sequence>MDGIRVYIETFGCTFNQADSEIMAGVLREEGAVLTGIDDADVIIINTCYVKHPTEHKVINRIKKIQETYPEKGLVVAGCMVEIDPSKLEAISGDASWLGPHQLRRAPQAVRAASNGLVERITGFTSDVKVKVPRVRSNPLIHIIPICEGCNGSCSYCCTRFARGRIQSYPSDLIISEAREAVASGCREIQLTAQDTAAYGVDTGEKLSDIIKGISGIPGNFRIRVGMMHPASVLRDLDGLVEAFKSEKVYSFLHLPVQSGSDSVLADMERGHTVDEFRMIVERFRSEIPDISIATDIIVGYPTEEREDFMDTCSLLEEVKPSFIHLSKYRHRPRARSSSLDEIDFRELRRRSRALEELKMRITEEENRRLVGSFQEILVVERGRKGGFIGRTGSYIPVVTETGEPGSFRRVRIRDATGTYLLAD</sequence>
<comment type="function">
    <text evidence="1">Catalyzes the methylthiolation of N6-threonylcarbamoyladenosine (t(6)A), leading to the formation of 2-methylthio-N6-threonylcarbamoyladenosine (ms(2)t(6)A) at position 37 in tRNAs that read codons beginning with adenine.</text>
</comment>
<comment type="catalytic activity">
    <reaction evidence="1">
        <text>N(6)-L-threonylcarbamoyladenosine(37) in tRNA + (sulfur carrier)-SH + AH2 + 2 S-adenosyl-L-methionine = 2-methylsulfanyl-N(6)-L-threonylcarbamoyladenosine(37) in tRNA + (sulfur carrier)-H + 5'-deoxyadenosine + L-methionine + A + S-adenosyl-L-homocysteine + 2 H(+)</text>
        <dbReference type="Rhea" id="RHEA:37075"/>
        <dbReference type="Rhea" id="RHEA-COMP:10163"/>
        <dbReference type="Rhea" id="RHEA-COMP:11092"/>
        <dbReference type="Rhea" id="RHEA-COMP:14737"/>
        <dbReference type="Rhea" id="RHEA-COMP:14739"/>
        <dbReference type="ChEBI" id="CHEBI:13193"/>
        <dbReference type="ChEBI" id="CHEBI:15378"/>
        <dbReference type="ChEBI" id="CHEBI:17319"/>
        <dbReference type="ChEBI" id="CHEBI:17499"/>
        <dbReference type="ChEBI" id="CHEBI:29917"/>
        <dbReference type="ChEBI" id="CHEBI:57844"/>
        <dbReference type="ChEBI" id="CHEBI:57856"/>
        <dbReference type="ChEBI" id="CHEBI:59789"/>
        <dbReference type="ChEBI" id="CHEBI:64428"/>
        <dbReference type="ChEBI" id="CHEBI:74418"/>
        <dbReference type="ChEBI" id="CHEBI:74420"/>
        <dbReference type="EC" id="2.8.4.5"/>
    </reaction>
</comment>
<comment type="cofactor">
    <cofactor evidence="3">
        <name>[4Fe-4S] cluster</name>
        <dbReference type="ChEBI" id="CHEBI:49883"/>
    </cofactor>
    <text evidence="3">Binds 2 [4Fe-4S] clusters. One cluster is coordinated with 3 cysteines and an exchangeable S-adenosyl-L-methionine.</text>
</comment>
<comment type="similarity">
    <text evidence="5">Belongs to the methylthiotransferase family. CDKAL1 subfamily.</text>
</comment>
<dbReference type="EC" id="2.8.4.5"/>
<dbReference type="EMBL" id="AE000666">
    <property type="protein sequence ID" value="AAB85324.1"/>
    <property type="molecule type" value="Genomic_DNA"/>
</dbReference>
<dbReference type="PIR" id="B69210">
    <property type="entry name" value="B69210"/>
</dbReference>
<dbReference type="SMR" id="O26914"/>
<dbReference type="FunCoup" id="O26914">
    <property type="interactions" value="234"/>
</dbReference>
<dbReference type="STRING" id="187420.MTH_826"/>
<dbReference type="PaxDb" id="187420-MTH_826"/>
<dbReference type="EnsemblBacteria" id="AAB85324">
    <property type="protein sequence ID" value="AAB85324"/>
    <property type="gene ID" value="MTH_826"/>
</dbReference>
<dbReference type="KEGG" id="mth:MTH_826"/>
<dbReference type="PATRIC" id="fig|187420.15.peg.809"/>
<dbReference type="HOGENOM" id="CLU_018697_4_2_2"/>
<dbReference type="InParanoid" id="O26914"/>
<dbReference type="Proteomes" id="UP000005223">
    <property type="component" value="Chromosome"/>
</dbReference>
<dbReference type="GO" id="GO:0051539">
    <property type="term" value="F:4 iron, 4 sulfur cluster binding"/>
    <property type="evidence" value="ECO:0007669"/>
    <property type="project" value="UniProtKB-KW"/>
</dbReference>
<dbReference type="GO" id="GO:0046872">
    <property type="term" value="F:metal ion binding"/>
    <property type="evidence" value="ECO:0007669"/>
    <property type="project" value="UniProtKB-KW"/>
</dbReference>
<dbReference type="GO" id="GO:0035598">
    <property type="term" value="F:N6-threonylcarbomyladenosine methylthiotransferase activity"/>
    <property type="evidence" value="ECO:0007669"/>
    <property type="project" value="InterPro"/>
</dbReference>
<dbReference type="GO" id="GO:0061712">
    <property type="term" value="F:tRNA (N(6)-L-threonylcarbamoyladenosine(37)-C(2))-methylthiotransferase"/>
    <property type="evidence" value="ECO:0007669"/>
    <property type="project" value="UniProtKB-EC"/>
</dbReference>
<dbReference type="CDD" id="cd01335">
    <property type="entry name" value="Radical_SAM"/>
    <property type="match status" value="1"/>
</dbReference>
<dbReference type="FunFam" id="3.40.50.12160:FF:000003">
    <property type="entry name" value="CDK5 regulatory subunit-associated protein 1"/>
    <property type="match status" value="1"/>
</dbReference>
<dbReference type="FunFam" id="3.80.30.20:FF:000002">
    <property type="entry name" value="threonylcarbamoyladenosine tRNA methylthiotransferase isoform X2"/>
    <property type="match status" value="1"/>
</dbReference>
<dbReference type="Gene3D" id="3.40.50.12160">
    <property type="entry name" value="Methylthiotransferase, N-terminal domain"/>
    <property type="match status" value="1"/>
</dbReference>
<dbReference type="Gene3D" id="3.80.30.20">
    <property type="entry name" value="tm_1862 like domain"/>
    <property type="match status" value="1"/>
</dbReference>
<dbReference type="InterPro" id="IPR006638">
    <property type="entry name" value="Elp3/MiaA/NifB-like_rSAM"/>
</dbReference>
<dbReference type="InterPro" id="IPR005839">
    <property type="entry name" value="Methylthiotransferase"/>
</dbReference>
<dbReference type="InterPro" id="IPR020612">
    <property type="entry name" value="Methylthiotransferase_CS"/>
</dbReference>
<dbReference type="InterPro" id="IPR013848">
    <property type="entry name" value="Methylthiotransferase_N"/>
</dbReference>
<dbReference type="InterPro" id="IPR038135">
    <property type="entry name" value="Methylthiotransferase_N_sf"/>
</dbReference>
<dbReference type="InterPro" id="IPR006466">
    <property type="entry name" value="MiaB-like_arc_euk"/>
</dbReference>
<dbReference type="InterPro" id="IPR007197">
    <property type="entry name" value="rSAM"/>
</dbReference>
<dbReference type="InterPro" id="IPR023404">
    <property type="entry name" value="rSAM_horseshoe"/>
</dbReference>
<dbReference type="InterPro" id="IPR002792">
    <property type="entry name" value="TRAM_dom"/>
</dbReference>
<dbReference type="NCBIfam" id="TIGR01578">
    <property type="entry name" value="MiaB-like-B"/>
    <property type="match status" value="1"/>
</dbReference>
<dbReference type="NCBIfam" id="TIGR00089">
    <property type="entry name" value="MiaB/RimO family radical SAM methylthiotransferase"/>
    <property type="match status" value="1"/>
</dbReference>
<dbReference type="PANTHER" id="PTHR11918">
    <property type="entry name" value="RADICAL SAM PROTEINS"/>
    <property type="match status" value="1"/>
</dbReference>
<dbReference type="PANTHER" id="PTHR11918:SF45">
    <property type="entry name" value="THREONYLCARBAMOYLADENOSINE TRNA METHYLTHIOTRANSFERASE"/>
    <property type="match status" value="1"/>
</dbReference>
<dbReference type="Pfam" id="PF04055">
    <property type="entry name" value="Radical_SAM"/>
    <property type="match status" value="1"/>
</dbReference>
<dbReference type="Pfam" id="PF01938">
    <property type="entry name" value="TRAM"/>
    <property type="match status" value="1"/>
</dbReference>
<dbReference type="Pfam" id="PF00919">
    <property type="entry name" value="UPF0004"/>
    <property type="match status" value="1"/>
</dbReference>
<dbReference type="SFLD" id="SFLDG01082">
    <property type="entry name" value="B12-binding_domain_containing"/>
    <property type="match status" value="1"/>
</dbReference>
<dbReference type="SFLD" id="SFLDG01061">
    <property type="entry name" value="methylthiotransferase"/>
    <property type="match status" value="1"/>
</dbReference>
<dbReference type="SFLD" id="SFLDS00029">
    <property type="entry name" value="Radical_SAM"/>
    <property type="match status" value="1"/>
</dbReference>
<dbReference type="SMART" id="SM00729">
    <property type="entry name" value="Elp3"/>
    <property type="match status" value="1"/>
</dbReference>
<dbReference type="SUPFAM" id="SSF102114">
    <property type="entry name" value="Radical SAM enzymes"/>
    <property type="match status" value="1"/>
</dbReference>
<dbReference type="PROSITE" id="PS51449">
    <property type="entry name" value="MTTASE_N"/>
    <property type="match status" value="1"/>
</dbReference>
<dbReference type="PROSITE" id="PS01278">
    <property type="entry name" value="MTTASE_RADICAL"/>
    <property type="match status" value="1"/>
</dbReference>
<dbReference type="PROSITE" id="PS51918">
    <property type="entry name" value="RADICAL_SAM"/>
    <property type="match status" value="1"/>
</dbReference>
<dbReference type="PROSITE" id="PS50926">
    <property type="entry name" value="TRAM"/>
    <property type="match status" value="1"/>
</dbReference>
<proteinExistence type="inferred from homology"/>